<name>ASPA_PROM9</name>
<protein>
    <recommendedName>
        <fullName evidence="1">Probable aspartoacylase</fullName>
        <ecNumber evidence="1">3.5.1.15</ecNumber>
    </recommendedName>
</protein>
<reference key="1">
    <citation type="journal article" date="2006" name="Science">
        <title>Genomic islands and the ecology and evolution of Prochlorococcus.</title>
        <authorList>
            <person name="Coleman M.L."/>
            <person name="Sullivan M.B."/>
            <person name="Martiny A.C."/>
            <person name="Steglich C."/>
            <person name="Barry K."/>
            <person name="Delong E.F."/>
            <person name="Chisholm S.W."/>
        </authorList>
    </citation>
    <scope>NUCLEOTIDE SEQUENCE [LARGE SCALE GENOMIC DNA]</scope>
    <source>
        <strain>MIT 9312</strain>
    </source>
</reference>
<accession>Q31CV9</accession>
<keyword id="KW-0378">Hydrolase</keyword>
<keyword id="KW-0479">Metal-binding</keyword>
<keyword id="KW-0862">Zinc</keyword>
<evidence type="ECO:0000255" key="1">
    <source>
        <dbReference type="HAMAP-Rule" id="MF_00704"/>
    </source>
</evidence>
<sequence>MTVQRILIVAGTHGNEINPIWAVKQFNRNENSLKHGIEYEYIIGNPIAYEKGCRYIDADLNRSFKKSKNYDQNENSFYEISRANFLVDQFGINGSKPCQIAIDLHTTTANMGTSIVMYGRRFKDFCLAALLQNKFGLPIYLHEKDKSQTGFLVEAWPCGLVIEIGAVAQNFYDPKIINRFLIIISSLRDEIDKLKKNLIELPKDLVVHVHQGSVDYPRDEKGDIDGLIHPKRINRDWKMIKKGDPLFLNSQGIIYKYDGDQFIWPVFIGEVAYKEKQIAMSYTNKEVICSKNEWVQEFHRL</sequence>
<gene>
    <name type="ordered locus">PMT9312_0224</name>
</gene>
<proteinExistence type="inferred from homology"/>
<comment type="catalytic activity">
    <reaction evidence="1">
        <text>an N-acyl-L-aspartate + H2O = a carboxylate + L-aspartate</text>
        <dbReference type="Rhea" id="RHEA:10872"/>
        <dbReference type="ChEBI" id="CHEBI:15377"/>
        <dbReference type="ChEBI" id="CHEBI:29067"/>
        <dbReference type="ChEBI" id="CHEBI:29991"/>
        <dbReference type="ChEBI" id="CHEBI:58497"/>
        <dbReference type="EC" id="3.5.1.15"/>
    </reaction>
</comment>
<comment type="cofactor">
    <cofactor evidence="1">
        <name>Zn(2+)</name>
        <dbReference type="ChEBI" id="CHEBI:29105"/>
    </cofactor>
    <text evidence="1">Binds 1 zinc ion per subunit.</text>
</comment>
<comment type="similarity">
    <text evidence="1">Belongs to the AspA/AstE family. Aspartoacylase subfamily.</text>
</comment>
<organism>
    <name type="scientific">Prochlorococcus marinus (strain MIT 9312)</name>
    <dbReference type="NCBI Taxonomy" id="74546"/>
    <lineage>
        <taxon>Bacteria</taxon>
        <taxon>Bacillati</taxon>
        <taxon>Cyanobacteriota</taxon>
        <taxon>Cyanophyceae</taxon>
        <taxon>Synechococcales</taxon>
        <taxon>Prochlorococcaceae</taxon>
        <taxon>Prochlorococcus</taxon>
    </lineage>
</organism>
<feature type="chain" id="PRO_1000147940" description="Probable aspartoacylase">
    <location>
        <begin position="1"/>
        <end position="301"/>
    </location>
</feature>
<feature type="binding site" evidence="1">
    <location>
        <position position="13"/>
    </location>
    <ligand>
        <name>Zn(2+)</name>
        <dbReference type="ChEBI" id="CHEBI:29105"/>
    </ligand>
</feature>
<feature type="binding site" evidence="1">
    <location>
        <position position="16"/>
    </location>
    <ligand>
        <name>Zn(2+)</name>
        <dbReference type="ChEBI" id="CHEBI:29105"/>
    </ligand>
</feature>
<feature type="binding site" evidence="1">
    <location>
        <position position="54"/>
    </location>
    <ligand>
        <name>substrate</name>
    </ligand>
</feature>
<feature type="binding site" evidence="1">
    <location>
        <begin position="61"/>
        <end position="62"/>
    </location>
    <ligand>
        <name>substrate</name>
    </ligand>
</feature>
<feature type="binding site" evidence="1">
    <location>
        <position position="105"/>
    </location>
    <ligand>
        <name>Zn(2+)</name>
        <dbReference type="ChEBI" id="CHEBI:29105"/>
    </ligand>
</feature>
<feature type="binding site" evidence="1">
    <location>
        <position position="163"/>
    </location>
    <ligand>
        <name>substrate</name>
    </ligand>
</feature>
<feature type="binding site" evidence="1">
    <location>
        <position position="273"/>
    </location>
    <ligand>
        <name>substrate</name>
    </ligand>
</feature>
<dbReference type="EC" id="3.5.1.15" evidence="1"/>
<dbReference type="EMBL" id="CP000111">
    <property type="protein sequence ID" value="ABB49286.1"/>
    <property type="molecule type" value="Genomic_DNA"/>
</dbReference>
<dbReference type="RefSeq" id="WP_011375790.1">
    <property type="nucleotide sequence ID" value="NC_007577.1"/>
</dbReference>
<dbReference type="SMR" id="Q31CV9"/>
<dbReference type="STRING" id="74546.PMT9312_0224"/>
<dbReference type="KEGG" id="pmi:PMT9312_0224"/>
<dbReference type="eggNOG" id="COG2988">
    <property type="taxonomic scope" value="Bacteria"/>
</dbReference>
<dbReference type="HOGENOM" id="CLU_083292_0_0_3"/>
<dbReference type="OrthoDB" id="531770at2"/>
<dbReference type="Proteomes" id="UP000002715">
    <property type="component" value="Chromosome"/>
</dbReference>
<dbReference type="GO" id="GO:0005829">
    <property type="term" value="C:cytosol"/>
    <property type="evidence" value="ECO:0007669"/>
    <property type="project" value="TreeGrafter"/>
</dbReference>
<dbReference type="GO" id="GO:0019807">
    <property type="term" value="F:aspartoacylase activity"/>
    <property type="evidence" value="ECO:0007669"/>
    <property type="project" value="UniProtKB-UniRule"/>
</dbReference>
<dbReference type="GO" id="GO:0016788">
    <property type="term" value="F:hydrolase activity, acting on ester bonds"/>
    <property type="evidence" value="ECO:0007669"/>
    <property type="project" value="InterPro"/>
</dbReference>
<dbReference type="GO" id="GO:0008270">
    <property type="term" value="F:zinc ion binding"/>
    <property type="evidence" value="ECO:0007669"/>
    <property type="project" value="UniProtKB-UniRule"/>
</dbReference>
<dbReference type="Gene3D" id="2.20.25.160">
    <property type="match status" value="1"/>
</dbReference>
<dbReference type="Gene3D" id="3.40.630.10">
    <property type="entry name" value="Zn peptidases"/>
    <property type="match status" value="1"/>
</dbReference>
<dbReference type="HAMAP" id="MF_00704">
    <property type="entry name" value="Aspartoacylase"/>
    <property type="match status" value="1"/>
</dbReference>
<dbReference type="InterPro" id="IPR050178">
    <property type="entry name" value="AspA/AstE_fam"/>
</dbReference>
<dbReference type="InterPro" id="IPR016708">
    <property type="entry name" value="Aspartoacylase"/>
</dbReference>
<dbReference type="InterPro" id="IPR055438">
    <property type="entry name" value="AstE_AspA_cat"/>
</dbReference>
<dbReference type="InterPro" id="IPR007036">
    <property type="entry name" value="Aste_AspA_hybrid_dom"/>
</dbReference>
<dbReference type="NCBIfam" id="NF002601">
    <property type="entry name" value="PRK02259.1"/>
    <property type="match status" value="1"/>
</dbReference>
<dbReference type="PANTHER" id="PTHR15162">
    <property type="entry name" value="ASPARTOACYLASE"/>
    <property type="match status" value="1"/>
</dbReference>
<dbReference type="PANTHER" id="PTHR15162:SF7">
    <property type="entry name" value="SUCCINYLGLUTAMATE DESUCCINYLASE"/>
    <property type="match status" value="1"/>
</dbReference>
<dbReference type="Pfam" id="PF24827">
    <property type="entry name" value="AstE_AspA_cat"/>
    <property type="match status" value="1"/>
</dbReference>
<dbReference type="Pfam" id="PF04952">
    <property type="entry name" value="AstE_AspA_hybrid"/>
    <property type="match status" value="1"/>
</dbReference>
<dbReference type="PIRSF" id="PIRSF018001">
    <property type="entry name" value="Aspartoacylase"/>
    <property type="match status" value="1"/>
</dbReference>
<dbReference type="SUPFAM" id="SSF53187">
    <property type="entry name" value="Zn-dependent exopeptidases"/>
    <property type="match status" value="1"/>
</dbReference>